<organism>
    <name type="scientific">Escherichia coli O157:H7 (strain EC4115 / EHEC)</name>
    <dbReference type="NCBI Taxonomy" id="444450"/>
    <lineage>
        <taxon>Bacteria</taxon>
        <taxon>Pseudomonadati</taxon>
        <taxon>Pseudomonadota</taxon>
        <taxon>Gammaproteobacteria</taxon>
        <taxon>Enterobacterales</taxon>
        <taxon>Enterobacteriaceae</taxon>
        <taxon>Escherichia</taxon>
    </lineage>
</organism>
<keyword id="KW-0143">Chaperone</keyword>
<keyword id="KW-1029">Fimbrium biogenesis</keyword>
<keyword id="KW-0732">Signal</keyword>
<feature type="signal peptide" evidence="2">
    <location>
        <begin position="1"/>
        <end position="20"/>
    </location>
</feature>
<feature type="chain" id="PRO_0000369162" description="Probable fimbrial chaperone EcpB">
    <location>
        <begin position="21"/>
        <end position="222"/>
    </location>
</feature>
<evidence type="ECO:0000250" key="1"/>
<evidence type="ECO:0000255" key="2"/>
<evidence type="ECO:0000305" key="3"/>
<gene>
    <name type="primary">ecpB</name>
    <name type="synonym">matC</name>
    <name type="ordered locus">ECH74115_0338</name>
</gene>
<comment type="function">
    <text evidence="1">Part of the ecpRABCDE operon, which encodes the E.coli common pilus (ECP). ECP is found in both commensal and pathogenic strains and plays a dual role in early-stage biofilm development and host cell recognition (By similarity).</text>
</comment>
<comment type="induction">
    <text evidence="1">Negatively regulated by H-NS. Positively regulated by IHF and EcpR (By similarity).</text>
</comment>
<comment type="similarity">
    <text evidence="3">Belongs to the EcpB/EcpE family.</text>
</comment>
<protein>
    <recommendedName>
        <fullName>Probable fimbrial chaperone EcpB</fullName>
    </recommendedName>
</protein>
<sequence>MKKHLLLLALLLSGISPAQALDVGDISSFMNSDSSTLSKTIKNSTDSGRLINIRLERLSSPLDDGQVISMDKPDELLLTPASLLLPAQASEVIRFFYKGPADEKERYYRIVWFDQALSDAQRDNANRSAVATASARIGTILVVAPRQANYHFQYANGTLTNTGNATLRILAYGPCLKAANGKECKENYYLMPGKSRRFTRVDTADNKGRVALWQGDKFIPVK</sequence>
<name>ECPB_ECO5E</name>
<accession>B5Z1N1</accession>
<reference key="1">
    <citation type="journal article" date="2011" name="Proc. Natl. Acad. Sci. U.S.A.">
        <title>Genomic anatomy of Escherichia coli O157:H7 outbreaks.</title>
        <authorList>
            <person name="Eppinger M."/>
            <person name="Mammel M.K."/>
            <person name="Leclerc J.E."/>
            <person name="Ravel J."/>
            <person name="Cebula T.A."/>
        </authorList>
    </citation>
    <scope>NUCLEOTIDE SEQUENCE [LARGE SCALE GENOMIC DNA]</scope>
    <source>
        <strain>EC4115 / EHEC</strain>
    </source>
</reference>
<proteinExistence type="inferred from homology"/>
<dbReference type="EMBL" id="CP001164">
    <property type="protein sequence ID" value="ACI39707.1"/>
    <property type="molecule type" value="Genomic_DNA"/>
</dbReference>
<dbReference type="RefSeq" id="WP_000716386.1">
    <property type="nucleotide sequence ID" value="NC_011353.1"/>
</dbReference>
<dbReference type="SMR" id="B5Z1N1"/>
<dbReference type="KEGG" id="ecf:ECH74115_0338"/>
<dbReference type="HOGENOM" id="CLU_106652_0_0_6"/>
<dbReference type="Gene3D" id="2.60.40.10">
    <property type="entry name" value="Immunoglobulins"/>
    <property type="match status" value="1"/>
</dbReference>
<dbReference type="InterPro" id="IPR040695">
    <property type="entry name" value="EcpB_C"/>
</dbReference>
<dbReference type="InterPro" id="IPR013783">
    <property type="entry name" value="Ig-like_fold"/>
</dbReference>
<dbReference type="InterPro" id="IPR008962">
    <property type="entry name" value="PapD-like_sf"/>
</dbReference>
<dbReference type="Pfam" id="PF18649">
    <property type="entry name" value="EcpB_C"/>
    <property type="match status" value="1"/>
</dbReference>
<dbReference type="SUPFAM" id="SSF49354">
    <property type="entry name" value="PapD-like"/>
    <property type="match status" value="1"/>
</dbReference>